<comment type="function">
    <text evidence="1">Could be a mediator in iron transactions between iron acquisition and iron-requiring processes, such as synthesis and/or repair of Fe-S clusters in biosynthetic enzymes.</text>
</comment>
<comment type="similarity">
    <text evidence="1">Belongs to the Fe(2+)-trafficking protein family.</text>
</comment>
<proteinExistence type="inferred from homology"/>
<keyword id="KW-0408">Iron</keyword>
<gene>
    <name type="ordered locus">Shewana3_1180</name>
</gene>
<organism>
    <name type="scientific">Shewanella sp. (strain ANA-3)</name>
    <dbReference type="NCBI Taxonomy" id="94122"/>
    <lineage>
        <taxon>Bacteria</taxon>
        <taxon>Pseudomonadati</taxon>
        <taxon>Pseudomonadota</taxon>
        <taxon>Gammaproteobacteria</taxon>
        <taxon>Alteromonadales</taxon>
        <taxon>Shewanellaceae</taxon>
        <taxon>Shewanella</taxon>
    </lineage>
</organism>
<reference key="1">
    <citation type="submission" date="2006-09" db="EMBL/GenBank/DDBJ databases">
        <title>Complete sequence of chromosome 1 of Shewanella sp. ANA-3.</title>
        <authorList>
            <person name="Copeland A."/>
            <person name="Lucas S."/>
            <person name="Lapidus A."/>
            <person name="Barry K."/>
            <person name="Detter J.C."/>
            <person name="Glavina del Rio T."/>
            <person name="Hammon N."/>
            <person name="Israni S."/>
            <person name="Dalin E."/>
            <person name="Tice H."/>
            <person name="Pitluck S."/>
            <person name="Chertkov O."/>
            <person name="Brettin T."/>
            <person name="Bruce D."/>
            <person name="Han C."/>
            <person name="Tapia R."/>
            <person name="Gilna P."/>
            <person name="Schmutz J."/>
            <person name="Larimer F."/>
            <person name="Land M."/>
            <person name="Hauser L."/>
            <person name="Kyrpides N."/>
            <person name="Kim E."/>
            <person name="Newman D."/>
            <person name="Salticov C."/>
            <person name="Konstantinidis K."/>
            <person name="Klappenback J."/>
            <person name="Tiedje J."/>
            <person name="Richardson P."/>
        </authorList>
    </citation>
    <scope>NUCLEOTIDE SEQUENCE [LARGE SCALE GENOMIC DNA]</scope>
    <source>
        <strain>ANA-3</strain>
    </source>
</reference>
<evidence type="ECO:0000255" key="1">
    <source>
        <dbReference type="HAMAP-Rule" id="MF_00686"/>
    </source>
</evidence>
<dbReference type="EMBL" id="CP000469">
    <property type="protein sequence ID" value="ABK47415.1"/>
    <property type="molecule type" value="Genomic_DNA"/>
</dbReference>
<dbReference type="RefSeq" id="WP_011621967.1">
    <property type="nucleotide sequence ID" value="NC_008577.1"/>
</dbReference>
<dbReference type="SMR" id="A0KUE6"/>
<dbReference type="STRING" id="94122.Shewana3_1180"/>
<dbReference type="KEGG" id="shn:Shewana3_1180"/>
<dbReference type="eggNOG" id="COG2924">
    <property type="taxonomic scope" value="Bacteria"/>
</dbReference>
<dbReference type="HOGENOM" id="CLU_170994_0_0_6"/>
<dbReference type="OrthoDB" id="9804318at2"/>
<dbReference type="Proteomes" id="UP000002589">
    <property type="component" value="Chromosome"/>
</dbReference>
<dbReference type="GO" id="GO:0005829">
    <property type="term" value="C:cytosol"/>
    <property type="evidence" value="ECO:0007669"/>
    <property type="project" value="TreeGrafter"/>
</dbReference>
<dbReference type="GO" id="GO:0005506">
    <property type="term" value="F:iron ion binding"/>
    <property type="evidence" value="ECO:0007669"/>
    <property type="project" value="UniProtKB-UniRule"/>
</dbReference>
<dbReference type="GO" id="GO:0034599">
    <property type="term" value="P:cellular response to oxidative stress"/>
    <property type="evidence" value="ECO:0007669"/>
    <property type="project" value="TreeGrafter"/>
</dbReference>
<dbReference type="FunFam" id="1.10.3880.10:FF:000001">
    <property type="entry name" value="Probable Fe(2+)-trafficking protein"/>
    <property type="match status" value="1"/>
</dbReference>
<dbReference type="Gene3D" id="1.10.3880.10">
    <property type="entry name" value="Fe(II) trafficking protein YggX"/>
    <property type="match status" value="1"/>
</dbReference>
<dbReference type="HAMAP" id="MF_00686">
    <property type="entry name" value="Fe_traffic_YggX"/>
    <property type="match status" value="1"/>
</dbReference>
<dbReference type="InterPro" id="IPR007457">
    <property type="entry name" value="Fe_traffick_prot_YggX"/>
</dbReference>
<dbReference type="InterPro" id="IPR036766">
    <property type="entry name" value="Fe_traffick_prot_YggX_sf"/>
</dbReference>
<dbReference type="NCBIfam" id="NF003817">
    <property type="entry name" value="PRK05408.1"/>
    <property type="match status" value="1"/>
</dbReference>
<dbReference type="PANTHER" id="PTHR36965">
    <property type="entry name" value="FE(2+)-TRAFFICKING PROTEIN-RELATED"/>
    <property type="match status" value="1"/>
</dbReference>
<dbReference type="PANTHER" id="PTHR36965:SF1">
    <property type="entry name" value="FE(2+)-TRAFFICKING PROTEIN-RELATED"/>
    <property type="match status" value="1"/>
</dbReference>
<dbReference type="Pfam" id="PF04362">
    <property type="entry name" value="Iron_traffic"/>
    <property type="match status" value="1"/>
</dbReference>
<dbReference type="PIRSF" id="PIRSF029827">
    <property type="entry name" value="Fe_traffic_YggX"/>
    <property type="match status" value="1"/>
</dbReference>
<dbReference type="SUPFAM" id="SSF111148">
    <property type="entry name" value="YggX-like"/>
    <property type="match status" value="1"/>
</dbReference>
<accession>A0KUE6</accession>
<protein>
    <recommendedName>
        <fullName evidence="1">Probable Fe(2+)-trafficking protein</fullName>
    </recommendedName>
</protein>
<name>FETP_SHESA</name>
<feature type="chain" id="PRO_1000045067" description="Probable Fe(2+)-trafficking protein">
    <location>
        <begin position="1"/>
        <end position="92"/>
    </location>
</feature>
<sequence>MARTVNCVYLNKEADGLDFQLYPGDLGKRIFDNVSKEAWGLWQKKQTMLINEKKLNMMNVDDRKFLEEQMTSFLFEGKDVEIEGFVPEKGQE</sequence>